<keyword id="KW-0665">Pyrimidine biosynthesis</keyword>
<keyword id="KW-1185">Reference proteome</keyword>
<keyword id="KW-0808">Transferase</keyword>
<evidence type="ECO:0000255" key="1">
    <source>
        <dbReference type="HAMAP-Rule" id="MF_00001"/>
    </source>
</evidence>
<feature type="chain" id="PRO_0000113246" description="Aspartate carbamoyltransferase catalytic subunit">
    <location>
        <begin position="1"/>
        <end position="308"/>
    </location>
</feature>
<feature type="binding site" evidence="1">
    <location>
        <position position="57"/>
    </location>
    <ligand>
        <name>carbamoyl phosphate</name>
        <dbReference type="ChEBI" id="CHEBI:58228"/>
    </ligand>
</feature>
<feature type="binding site" evidence="1">
    <location>
        <position position="58"/>
    </location>
    <ligand>
        <name>carbamoyl phosphate</name>
        <dbReference type="ChEBI" id="CHEBI:58228"/>
    </ligand>
</feature>
<feature type="binding site" evidence="1">
    <location>
        <position position="86"/>
    </location>
    <ligand>
        <name>L-aspartate</name>
        <dbReference type="ChEBI" id="CHEBI:29991"/>
    </ligand>
</feature>
<feature type="binding site" evidence="1">
    <location>
        <position position="107"/>
    </location>
    <ligand>
        <name>carbamoyl phosphate</name>
        <dbReference type="ChEBI" id="CHEBI:58228"/>
    </ligand>
</feature>
<feature type="binding site" evidence="1">
    <location>
        <position position="135"/>
    </location>
    <ligand>
        <name>carbamoyl phosphate</name>
        <dbReference type="ChEBI" id="CHEBI:58228"/>
    </ligand>
</feature>
<feature type="binding site" evidence="1">
    <location>
        <position position="138"/>
    </location>
    <ligand>
        <name>carbamoyl phosphate</name>
        <dbReference type="ChEBI" id="CHEBI:58228"/>
    </ligand>
</feature>
<feature type="binding site" evidence="1">
    <location>
        <position position="167"/>
    </location>
    <ligand>
        <name>L-aspartate</name>
        <dbReference type="ChEBI" id="CHEBI:29991"/>
    </ligand>
</feature>
<feature type="binding site" evidence="1">
    <location>
        <position position="228"/>
    </location>
    <ligand>
        <name>L-aspartate</name>
        <dbReference type="ChEBI" id="CHEBI:29991"/>
    </ligand>
</feature>
<feature type="binding site" evidence="1">
    <location>
        <position position="267"/>
    </location>
    <ligand>
        <name>carbamoyl phosphate</name>
        <dbReference type="ChEBI" id="CHEBI:58228"/>
    </ligand>
</feature>
<feature type="binding site" evidence="1">
    <location>
        <position position="268"/>
    </location>
    <ligand>
        <name>carbamoyl phosphate</name>
        <dbReference type="ChEBI" id="CHEBI:58228"/>
    </ligand>
</feature>
<name>PYRB_METAC</name>
<proteinExistence type="inferred from homology"/>
<sequence length="308" mass="34644">MLFKNRHVISMKDFSREEIDHVLDTAEKLEPVARGEERSRLLDGKIVSLLFFEPSTRTRLSFEAATQRLGGQALNLGSVEASSVMKGENLADTIRVISKYADLIVLRHPLDGSARMAAEFASVPVINGGDGSVHHPTQTFLDLYTIRRESHLEDLRIAMAGDLKYGRTVHSLCHALSLYGAEMTFVSPPELRMPPEIVRDLKKQKIRVKETDSLEEIIGDVEVLYMTRVQRERFPDPEEYEKVKNRLKVTGDLLKAADPELKVLHPLPRVNEIAPEVDATPHACYFEQAFYGVPIRMALLALAMGVIE</sequence>
<protein>
    <recommendedName>
        <fullName evidence="1">Aspartate carbamoyltransferase catalytic subunit</fullName>
        <ecNumber evidence="1">2.1.3.2</ecNumber>
    </recommendedName>
    <alternativeName>
        <fullName evidence="1">Aspartate transcarbamylase</fullName>
        <shortName evidence="1">ATCase</shortName>
    </alternativeName>
</protein>
<dbReference type="EC" id="2.1.3.2" evidence="1"/>
<dbReference type="EMBL" id="AE010299">
    <property type="protein sequence ID" value="AAM07842.1"/>
    <property type="molecule type" value="Genomic_DNA"/>
</dbReference>
<dbReference type="RefSeq" id="WP_011024378.1">
    <property type="nucleotide sequence ID" value="NC_003552.1"/>
</dbReference>
<dbReference type="SMR" id="Q8THL2"/>
<dbReference type="FunCoup" id="Q8THL2">
    <property type="interactions" value="224"/>
</dbReference>
<dbReference type="STRING" id="188937.MA_4502"/>
<dbReference type="EnsemblBacteria" id="AAM07842">
    <property type="protein sequence ID" value="AAM07842"/>
    <property type="gene ID" value="MA_4502"/>
</dbReference>
<dbReference type="GeneID" id="1476396"/>
<dbReference type="KEGG" id="mac:MA_4502"/>
<dbReference type="HOGENOM" id="CLU_043846_1_2_2"/>
<dbReference type="InParanoid" id="Q8THL2"/>
<dbReference type="OrthoDB" id="7792at2157"/>
<dbReference type="PhylomeDB" id="Q8THL2"/>
<dbReference type="UniPathway" id="UPA00070">
    <property type="reaction ID" value="UER00116"/>
</dbReference>
<dbReference type="Proteomes" id="UP000002487">
    <property type="component" value="Chromosome"/>
</dbReference>
<dbReference type="GO" id="GO:0016597">
    <property type="term" value="F:amino acid binding"/>
    <property type="evidence" value="ECO:0007669"/>
    <property type="project" value="InterPro"/>
</dbReference>
<dbReference type="GO" id="GO:0004070">
    <property type="term" value="F:aspartate carbamoyltransferase activity"/>
    <property type="evidence" value="ECO:0007669"/>
    <property type="project" value="UniProtKB-UniRule"/>
</dbReference>
<dbReference type="GO" id="GO:0006207">
    <property type="term" value="P:'de novo' pyrimidine nucleobase biosynthetic process"/>
    <property type="evidence" value="ECO:0007669"/>
    <property type="project" value="InterPro"/>
</dbReference>
<dbReference type="GO" id="GO:0044205">
    <property type="term" value="P:'de novo' UMP biosynthetic process"/>
    <property type="evidence" value="ECO:0007669"/>
    <property type="project" value="UniProtKB-UniRule"/>
</dbReference>
<dbReference type="GO" id="GO:0006520">
    <property type="term" value="P:amino acid metabolic process"/>
    <property type="evidence" value="ECO:0007669"/>
    <property type="project" value="InterPro"/>
</dbReference>
<dbReference type="FunFam" id="3.40.50.1370:FF:000001">
    <property type="entry name" value="Aspartate carbamoyltransferase"/>
    <property type="match status" value="1"/>
</dbReference>
<dbReference type="FunFam" id="3.40.50.1370:FF:000002">
    <property type="entry name" value="Aspartate carbamoyltransferase 2"/>
    <property type="match status" value="1"/>
</dbReference>
<dbReference type="Gene3D" id="3.40.50.1370">
    <property type="entry name" value="Aspartate/ornithine carbamoyltransferase"/>
    <property type="match status" value="2"/>
</dbReference>
<dbReference type="HAMAP" id="MF_00001">
    <property type="entry name" value="Asp_carb_tr"/>
    <property type="match status" value="1"/>
</dbReference>
<dbReference type="InterPro" id="IPR006132">
    <property type="entry name" value="Asp/Orn_carbamoyltranf_P-bd"/>
</dbReference>
<dbReference type="InterPro" id="IPR006130">
    <property type="entry name" value="Asp/Orn_carbamoylTrfase"/>
</dbReference>
<dbReference type="InterPro" id="IPR036901">
    <property type="entry name" value="Asp/Orn_carbamoylTrfase_sf"/>
</dbReference>
<dbReference type="InterPro" id="IPR002082">
    <property type="entry name" value="Asp_carbamoyltransf"/>
</dbReference>
<dbReference type="InterPro" id="IPR006131">
    <property type="entry name" value="Asp_carbamoyltransf_Asp/Orn-bd"/>
</dbReference>
<dbReference type="NCBIfam" id="TIGR00670">
    <property type="entry name" value="asp_carb_tr"/>
    <property type="match status" value="1"/>
</dbReference>
<dbReference type="NCBIfam" id="NF002032">
    <property type="entry name" value="PRK00856.1"/>
    <property type="match status" value="1"/>
</dbReference>
<dbReference type="PANTHER" id="PTHR45753:SF6">
    <property type="entry name" value="ASPARTATE CARBAMOYLTRANSFERASE"/>
    <property type="match status" value="1"/>
</dbReference>
<dbReference type="PANTHER" id="PTHR45753">
    <property type="entry name" value="ORNITHINE CARBAMOYLTRANSFERASE, MITOCHONDRIAL"/>
    <property type="match status" value="1"/>
</dbReference>
<dbReference type="Pfam" id="PF00185">
    <property type="entry name" value="OTCace"/>
    <property type="match status" value="1"/>
</dbReference>
<dbReference type="Pfam" id="PF02729">
    <property type="entry name" value="OTCace_N"/>
    <property type="match status" value="1"/>
</dbReference>
<dbReference type="PRINTS" id="PR00100">
    <property type="entry name" value="AOTCASE"/>
</dbReference>
<dbReference type="PRINTS" id="PR00101">
    <property type="entry name" value="ATCASE"/>
</dbReference>
<dbReference type="SUPFAM" id="SSF53671">
    <property type="entry name" value="Aspartate/ornithine carbamoyltransferase"/>
    <property type="match status" value="1"/>
</dbReference>
<dbReference type="PROSITE" id="PS00097">
    <property type="entry name" value="CARBAMOYLTRANSFERASE"/>
    <property type="match status" value="1"/>
</dbReference>
<organism>
    <name type="scientific">Methanosarcina acetivorans (strain ATCC 35395 / DSM 2834 / JCM 12185 / C2A)</name>
    <dbReference type="NCBI Taxonomy" id="188937"/>
    <lineage>
        <taxon>Archaea</taxon>
        <taxon>Methanobacteriati</taxon>
        <taxon>Methanobacteriota</taxon>
        <taxon>Stenosarchaea group</taxon>
        <taxon>Methanomicrobia</taxon>
        <taxon>Methanosarcinales</taxon>
        <taxon>Methanosarcinaceae</taxon>
        <taxon>Methanosarcina</taxon>
    </lineage>
</organism>
<comment type="function">
    <text evidence="1">Catalyzes the condensation of carbamoyl phosphate and aspartate to form carbamoyl aspartate and inorganic phosphate, the committed step in the de novo pyrimidine nucleotide biosynthesis pathway.</text>
</comment>
<comment type="catalytic activity">
    <reaction evidence="1">
        <text>carbamoyl phosphate + L-aspartate = N-carbamoyl-L-aspartate + phosphate + H(+)</text>
        <dbReference type="Rhea" id="RHEA:20013"/>
        <dbReference type="ChEBI" id="CHEBI:15378"/>
        <dbReference type="ChEBI" id="CHEBI:29991"/>
        <dbReference type="ChEBI" id="CHEBI:32814"/>
        <dbReference type="ChEBI" id="CHEBI:43474"/>
        <dbReference type="ChEBI" id="CHEBI:58228"/>
        <dbReference type="EC" id="2.1.3.2"/>
    </reaction>
</comment>
<comment type="pathway">
    <text evidence="1">Pyrimidine metabolism; UMP biosynthesis via de novo pathway; (S)-dihydroorotate from bicarbonate: step 2/3.</text>
</comment>
<comment type="subunit">
    <text evidence="1">Heterooligomer of catalytic and regulatory chains.</text>
</comment>
<comment type="similarity">
    <text evidence="1">Belongs to the aspartate/ornithine carbamoyltransferase superfamily. ATCase family.</text>
</comment>
<reference key="1">
    <citation type="journal article" date="2002" name="Genome Res.">
        <title>The genome of Methanosarcina acetivorans reveals extensive metabolic and physiological diversity.</title>
        <authorList>
            <person name="Galagan J.E."/>
            <person name="Nusbaum C."/>
            <person name="Roy A."/>
            <person name="Endrizzi M.G."/>
            <person name="Macdonald P."/>
            <person name="FitzHugh W."/>
            <person name="Calvo S."/>
            <person name="Engels R."/>
            <person name="Smirnov S."/>
            <person name="Atnoor D."/>
            <person name="Brown A."/>
            <person name="Allen N."/>
            <person name="Naylor J."/>
            <person name="Stange-Thomann N."/>
            <person name="DeArellano K."/>
            <person name="Johnson R."/>
            <person name="Linton L."/>
            <person name="McEwan P."/>
            <person name="McKernan K."/>
            <person name="Talamas J."/>
            <person name="Tirrell A."/>
            <person name="Ye W."/>
            <person name="Zimmer A."/>
            <person name="Barber R.D."/>
            <person name="Cann I."/>
            <person name="Graham D.E."/>
            <person name="Grahame D.A."/>
            <person name="Guss A.M."/>
            <person name="Hedderich R."/>
            <person name="Ingram-Smith C."/>
            <person name="Kuettner H.C."/>
            <person name="Krzycki J.A."/>
            <person name="Leigh J.A."/>
            <person name="Li W."/>
            <person name="Liu J."/>
            <person name="Mukhopadhyay B."/>
            <person name="Reeve J.N."/>
            <person name="Smith K."/>
            <person name="Springer T.A."/>
            <person name="Umayam L.A."/>
            <person name="White O."/>
            <person name="White R.H."/>
            <person name="de Macario E.C."/>
            <person name="Ferry J.G."/>
            <person name="Jarrell K.F."/>
            <person name="Jing H."/>
            <person name="Macario A.J.L."/>
            <person name="Paulsen I.T."/>
            <person name="Pritchett M."/>
            <person name="Sowers K.R."/>
            <person name="Swanson R.V."/>
            <person name="Zinder S.H."/>
            <person name="Lander E."/>
            <person name="Metcalf W.W."/>
            <person name="Birren B."/>
        </authorList>
    </citation>
    <scope>NUCLEOTIDE SEQUENCE [LARGE SCALE GENOMIC DNA]</scope>
    <source>
        <strain>ATCC 35395 / DSM 2834 / JCM 12185 / C2A</strain>
    </source>
</reference>
<accession>Q8THL2</accession>
<gene>
    <name evidence="1" type="primary">pyrB</name>
    <name type="ordered locus">MA_4502</name>
</gene>